<sequence>MKPYLAAALQMTSRPNLTENLQEAEELIDLAVRQGAELVGLPENFAFLGNETEKLEQATAIATATEKFLQTMAQRFQVTILAGGFPFPVAGEAGKAYNTATLIAPNGQELARYHKVHLFDVNVPDGNTYWESATVMAGQKYPPVYHSDSFGNLGLSICYDVRFPELYRYLSRQGADVLFVPAAFTAYTGKDHWQVLLQARAIENTCYVIAPAQTGCHYERRHTHGHAMIIDPWGVILADAGEKPGLAIAEINPDRLKQVRQQMPSLQHRVFV</sequence>
<proteinExistence type="evidence at protein level"/>
<gene>
    <name evidence="3" type="primary">nit1</name>
    <name type="synonym">sll0601</name>
    <name type="ordered locus">SYNGTS_2407</name>
</gene>
<dbReference type="EC" id="3.5.1.128" evidence="2"/>
<dbReference type="EMBL" id="AP012205">
    <property type="protein sequence ID" value="BAK51155.1"/>
    <property type="molecule type" value="Genomic_DNA"/>
</dbReference>
<dbReference type="SMR" id="P0DP66"/>
<dbReference type="KEGG" id="syy:SYNGTS_2407"/>
<dbReference type="BRENDA" id="3.5.1.128">
    <property type="organism ID" value="6192"/>
</dbReference>
<dbReference type="GO" id="GO:0110050">
    <property type="term" value="F:deaminated glutathione amidase activity"/>
    <property type="evidence" value="ECO:0007669"/>
    <property type="project" value="UniProtKB-EC"/>
</dbReference>
<dbReference type="CDD" id="cd07572">
    <property type="entry name" value="nit"/>
    <property type="match status" value="1"/>
</dbReference>
<dbReference type="Gene3D" id="3.60.110.10">
    <property type="entry name" value="Carbon-nitrogen hydrolase"/>
    <property type="match status" value="1"/>
</dbReference>
<dbReference type="InterPro" id="IPR003010">
    <property type="entry name" value="C-N_Hydrolase"/>
</dbReference>
<dbReference type="InterPro" id="IPR036526">
    <property type="entry name" value="C-N_Hydrolase_sf"/>
</dbReference>
<dbReference type="InterPro" id="IPR045254">
    <property type="entry name" value="Nit1/2_C-N_Hydrolase"/>
</dbReference>
<dbReference type="InterPro" id="IPR001110">
    <property type="entry name" value="UPF0012_CS"/>
</dbReference>
<dbReference type="PANTHER" id="PTHR23088:SF27">
    <property type="entry name" value="DEAMINATED GLUTATHIONE AMIDASE"/>
    <property type="match status" value="1"/>
</dbReference>
<dbReference type="PANTHER" id="PTHR23088">
    <property type="entry name" value="NITRILASE-RELATED"/>
    <property type="match status" value="1"/>
</dbReference>
<dbReference type="Pfam" id="PF00795">
    <property type="entry name" value="CN_hydrolase"/>
    <property type="match status" value="1"/>
</dbReference>
<dbReference type="SUPFAM" id="SSF56317">
    <property type="entry name" value="Carbon-nitrogen hydrolase"/>
    <property type="match status" value="1"/>
</dbReference>
<dbReference type="PROSITE" id="PS50263">
    <property type="entry name" value="CN_HYDROLASE"/>
    <property type="match status" value="1"/>
</dbReference>
<dbReference type="PROSITE" id="PS01227">
    <property type="entry name" value="UPF0012"/>
    <property type="match status" value="1"/>
</dbReference>
<name>NIT1_SYNYG</name>
<keyword id="KW-0378">Hydrolase</keyword>
<reference key="1">
    <citation type="journal article" date="2011" name="DNA Res.">
        <title>Genomic structure of the cyanobacterium Synechocystis sp. PCC 6803 strain GT-S.</title>
        <authorList>
            <person name="Tajima N."/>
            <person name="Sato S."/>
            <person name="Maruyama F."/>
            <person name="Kaneko T."/>
            <person name="Sasaki N.V."/>
            <person name="Kurokawa K."/>
            <person name="Ohta H."/>
            <person name="Kanesaki Y."/>
            <person name="Yoshikawa H."/>
            <person name="Tabata S."/>
            <person name="Ikeuchi M."/>
            <person name="Sato N."/>
        </authorList>
    </citation>
    <scope>NUCLEOTIDE SEQUENCE [LARGE SCALE GENOMIC DNA]</scope>
    <source>
        <strain>PCC 6803 / GT-S</strain>
    </source>
</reference>
<reference key="2">
    <citation type="journal article" date="2017" name="Proc. Natl. Acad. Sci. U.S.A.">
        <title>Nit1 is a metabolite repair enzyme that hydrolyzes deaminated glutathione.</title>
        <authorList>
            <person name="Peracchi A."/>
            <person name="Veiga-da-Cunha M."/>
            <person name="Kuhara T."/>
            <person name="Ellens K.W."/>
            <person name="Paczia N."/>
            <person name="Stroobant V."/>
            <person name="Seliga A.K."/>
            <person name="Marlaire S."/>
            <person name="Jaisson S."/>
            <person name="Bommer G.T."/>
            <person name="Sun J."/>
            <person name="Huebner K."/>
            <person name="Linster C.L."/>
            <person name="Cooper A.J.L."/>
            <person name="Van Schaftingen E."/>
        </authorList>
    </citation>
    <scope>FUNCTION</scope>
    <scope>CATALYTIC ACTIVITY</scope>
    <source>
        <strain>PCC 6803 / GT-S</strain>
    </source>
</reference>
<organism>
    <name type="scientific">Synechocystis sp. (strain PCC 6803 / GT-S)</name>
    <dbReference type="NCBI Taxonomy" id="1111707"/>
    <lineage>
        <taxon>Bacteria</taxon>
        <taxon>Bacillati</taxon>
        <taxon>Cyanobacteriota</taxon>
        <taxon>Cyanophyceae</taxon>
        <taxon>Synechococcales</taxon>
        <taxon>Merismopediaceae</taxon>
        <taxon>Synechocystis</taxon>
    </lineage>
</organism>
<evidence type="ECO:0000255" key="1">
    <source>
        <dbReference type="PROSITE-ProRule" id="PRU00054"/>
    </source>
</evidence>
<evidence type="ECO:0000269" key="2">
    <source>
    </source>
</evidence>
<evidence type="ECO:0000303" key="3">
    <source>
    </source>
</evidence>
<evidence type="ECO:0000305" key="4"/>
<comment type="function">
    <text evidence="2">Hydrolyzes deaminated glutathione (dGSH, 2-oxoglutaramate) to alpha-ketoglutarate (alpha-KG) and cysteinylglycine (specific activity 7.77 umol/min/mg), hydrolyzes alpha-ketoglutaramate (a-KGM, specific activity 2.13 umol/min/mg), has no activity on glutathione or L-glutamine. May function as a metabolite repair enzyme.</text>
</comment>
<comment type="catalytic activity">
    <reaction evidence="2">
        <text>N-(4-oxoglutaryl)-L-cysteinylglycine + H2O = L-cysteinylglycine + 2-oxoglutarate</text>
        <dbReference type="Rhea" id="RHEA:54532"/>
        <dbReference type="ChEBI" id="CHEBI:15377"/>
        <dbReference type="ChEBI" id="CHEBI:16810"/>
        <dbReference type="ChEBI" id="CHEBI:61694"/>
        <dbReference type="ChEBI" id="CHEBI:138256"/>
        <dbReference type="EC" id="3.5.1.128"/>
    </reaction>
</comment>
<comment type="similarity">
    <text evidence="4">Belongs to the carbon-nitrogen hydrolase superfamily. NIT1/NIT2 family.</text>
</comment>
<feature type="chain" id="PRO_0000440696" description="Deaminated glutathione amidase">
    <location>
        <begin position="1"/>
        <end position="272"/>
    </location>
</feature>
<feature type="domain" description="CN hydrolase" evidence="1">
    <location>
        <begin position="1"/>
        <end position="253"/>
    </location>
</feature>
<feature type="active site" description="Proton acceptor" evidence="1">
    <location>
        <position position="43"/>
    </location>
</feature>
<feature type="active site" description="Proton donor" evidence="1">
    <location>
        <position position="115"/>
    </location>
</feature>
<feature type="active site" description="Nucleophile" evidence="1">
    <location>
        <position position="158"/>
    </location>
</feature>
<protein>
    <recommendedName>
        <fullName evidence="4">Deaminated glutathione amidase</fullName>
        <shortName evidence="4">dGSH amidase</shortName>
        <ecNumber evidence="2">3.5.1.128</ecNumber>
    </recommendedName>
    <alternativeName>
        <fullName>Nitrilase homolog 1</fullName>
        <shortName evidence="3">syNit1</shortName>
    </alternativeName>
</protein>
<accession>P0DP66</accession>